<organism>
    <name type="scientific">Cyanophora paradoxa</name>
    <dbReference type="NCBI Taxonomy" id="2762"/>
    <lineage>
        <taxon>Eukaryota</taxon>
        <taxon>Glaucocystophyceae</taxon>
        <taxon>Cyanophoraceae</taxon>
        <taxon>Cyanophora</taxon>
    </lineage>
</organism>
<proteinExistence type="predicted"/>
<comment type="subcellular location">
    <subcellularLocation>
        <location>Plastid</location>
        <location>Cyanelle</location>
    </subcellularLocation>
</comment>
<accession>P48332</accession>
<geneLocation type="cyanelle"/>
<keyword id="KW-0194">Cyanelle</keyword>
<keyword id="KW-0934">Plastid</keyword>
<feature type="chain" id="PRO_0000217432" description="Uncharacterized 9.4 kDa protein in trpG-ccsA intergenic region">
    <location>
        <begin position="1"/>
        <end position="77"/>
    </location>
</feature>
<reference key="1">
    <citation type="journal article" date="1995" name="Plant Mol. Biol. Rep.">
        <title>Nucleotide sequence of the cyanelle DNA from Cyanophora paradoxa.</title>
        <authorList>
            <person name="Stirewalt V.L."/>
            <person name="Michalowski C.B."/>
            <person name="Loeffelhardt W."/>
            <person name="Bohnert H.J."/>
            <person name="Bryant D.A."/>
        </authorList>
    </citation>
    <scope>NUCLEOTIDE SEQUENCE [LARGE SCALE GENOMIC DNA]</scope>
    <source>
        <strain>UTEX LB 555 / Pringsheim</strain>
    </source>
</reference>
<reference key="2">
    <citation type="book" date="1997" name="Eukaryotism and symbiosis">
        <title>The complete sequence of the cyanelle genome of Cyanophora paradoxa: the genetic complexity of a primitive plastid.</title>
        <editorList>
            <person name="Schenk H.E.A."/>
            <person name="Herrmann R."/>
            <person name="Jeon K.W."/>
            <person name="Mueller N.E."/>
            <person name="Schwemmler W."/>
        </editorList>
        <authorList>
            <person name="Loeffelhardt W."/>
            <person name="Stirewalt V.L."/>
            <person name="Michalowski C.B."/>
            <person name="Annarella M."/>
            <person name="Farley J.Y."/>
            <person name="Schluchter W.M."/>
            <person name="Chung S."/>
            <person name="Newmann-Spallart C."/>
            <person name="Steiner J.M."/>
            <person name="Jakowitsch J."/>
            <person name="Bohnert H.J."/>
            <person name="Bryant D.A."/>
        </authorList>
    </citation>
    <scope>NUCLEOTIDE SEQUENCE [LARGE SCALE GENOMIC DNA]</scope>
    <source>
        <strain>UTEX LB 555 / Pringsheim</strain>
    </source>
</reference>
<protein>
    <recommendedName>
        <fullName>Uncharacterized 9.4 kDa protein in trpG-ccsA intergenic region</fullName>
    </recommendedName>
    <alternativeName>
        <fullName>ORF77</fullName>
    </alternativeName>
</protein>
<name>YCXB_CYAPA</name>
<sequence length="77" mass="9354">MEFENQKFLVILITPMVLVLALDDFYVEEEFVINDKKLLRLVIEHIKEKGQIQKRKTQMPLIIHNTRYVLRHIKKYT</sequence>
<dbReference type="EMBL" id="U30821">
    <property type="protein sequence ID" value="AAA81297.1"/>
    <property type="molecule type" value="Genomic_DNA"/>
</dbReference>
<dbReference type="PIR" id="T06954">
    <property type="entry name" value="T06954"/>
</dbReference>
<dbReference type="RefSeq" id="NP_043266.1">
    <property type="nucleotide sequence ID" value="NC_001675.1"/>
</dbReference>
<dbReference type="GeneID" id="1457210"/>
<dbReference type="GO" id="GO:0009842">
    <property type="term" value="C:cyanelle"/>
    <property type="evidence" value="ECO:0007669"/>
    <property type="project" value="UniProtKB-SubCell"/>
</dbReference>